<sequence length="104" mass="10438">MKKILFLMVALATAALANDGDVANQTLKAYSMIAAGLGLGLAALGGAIGMGHTAAATIAGTARNPGLGAKLMTTMFIALAMIEAQVIYALVIALIALYANPYLG</sequence>
<proteinExistence type="inferred from homology"/>
<dbReference type="EMBL" id="CP000153">
    <property type="protein sequence ID" value="ABB43710.1"/>
    <property type="molecule type" value="Genomic_DNA"/>
</dbReference>
<dbReference type="RefSeq" id="WP_011372064.1">
    <property type="nucleotide sequence ID" value="NC_007575.1"/>
</dbReference>
<dbReference type="SMR" id="Q30TH1"/>
<dbReference type="STRING" id="326298.Suden_0429"/>
<dbReference type="KEGG" id="tdn:Suden_0429"/>
<dbReference type="eggNOG" id="COG0636">
    <property type="taxonomic scope" value="Bacteria"/>
</dbReference>
<dbReference type="HOGENOM" id="CLU_148047_0_1_7"/>
<dbReference type="OrthoDB" id="5339943at2"/>
<dbReference type="Proteomes" id="UP000002714">
    <property type="component" value="Chromosome"/>
</dbReference>
<dbReference type="GO" id="GO:0005886">
    <property type="term" value="C:plasma membrane"/>
    <property type="evidence" value="ECO:0007669"/>
    <property type="project" value="UniProtKB-SubCell"/>
</dbReference>
<dbReference type="GO" id="GO:0045259">
    <property type="term" value="C:proton-transporting ATP synthase complex"/>
    <property type="evidence" value="ECO:0007669"/>
    <property type="project" value="UniProtKB-KW"/>
</dbReference>
<dbReference type="GO" id="GO:0033177">
    <property type="term" value="C:proton-transporting two-sector ATPase complex, proton-transporting domain"/>
    <property type="evidence" value="ECO:0007669"/>
    <property type="project" value="InterPro"/>
</dbReference>
<dbReference type="GO" id="GO:0008289">
    <property type="term" value="F:lipid binding"/>
    <property type="evidence" value="ECO:0007669"/>
    <property type="project" value="UniProtKB-KW"/>
</dbReference>
<dbReference type="GO" id="GO:0046933">
    <property type="term" value="F:proton-transporting ATP synthase activity, rotational mechanism"/>
    <property type="evidence" value="ECO:0007669"/>
    <property type="project" value="UniProtKB-UniRule"/>
</dbReference>
<dbReference type="CDD" id="cd18121">
    <property type="entry name" value="ATP-synt_Fo_c"/>
    <property type="match status" value="1"/>
</dbReference>
<dbReference type="FunFam" id="1.20.20.10:FF:000002">
    <property type="entry name" value="ATP synthase subunit c"/>
    <property type="match status" value="1"/>
</dbReference>
<dbReference type="Gene3D" id="1.20.20.10">
    <property type="entry name" value="F1F0 ATP synthase subunit C"/>
    <property type="match status" value="1"/>
</dbReference>
<dbReference type="HAMAP" id="MF_01396">
    <property type="entry name" value="ATP_synth_c_bact"/>
    <property type="match status" value="1"/>
</dbReference>
<dbReference type="InterPro" id="IPR005953">
    <property type="entry name" value="ATP_synth_csu_bac/chlpt"/>
</dbReference>
<dbReference type="InterPro" id="IPR000454">
    <property type="entry name" value="ATP_synth_F0_csu"/>
</dbReference>
<dbReference type="InterPro" id="IPR020537">
    <property type="entry name" value="ATP_synth_F0_csu_DDCD_BS"/>
</dbReference>
<dbReference type="InterPro" id="IPR038662">
    <property type="entry name" value="ATP_synth_F0_csu_sf"/>
</dbReference>
<dbReference type="InterPro" id="IPR002379">
    <property type="entry name" value="ATPase_proteolipid_c-like_dom"/>
</dbReference>
<dbReference type="InterPro" id="IPR035921">
    <property type="entry name" value="F/V-ATP_Csub_sf"/>
</dbReference>
<dbReference type="NCBIfam" id="TIGR01260">
    <property type="entry name" value="ATP_synt_c"/>
    <property type="match status" value="1"/>
</dbReference>
<dbReference type="NCBIfam" id="NF006295">
    <property type="entry name" value="PRK08482.1"/>
    <property type="match status" value="1"/>
</dbReference>
<dbReference type="Pfam" id="PF00137">
    <property type="entry name" value="ATP-synt_C"/>
    <property type="match status" value="1"/>
</dbReference>
<dbReference type="PRINTS" id="PR00124">
    <property type="entry name" value="ATPASEC"/>
</dbReference>
<dbReference type="SUPFAM" id="SSF81333">
    <property type="entry name" value="F1F0 ATP synthase subunit C"/>
    <property type="match status" value="1"/>
</dbReference>
<dbReference type="PROSITE" id="PS00605">
    <property type="entry name" value="ATPASE_C"/>
    <property type="match status" value="1"/>
</dbReference>
<protein>
    <recommendedName>
        <fullName evidence="1">ATP synthase subunit c</fullName>
    </recommendedName>
    <alternativeName>
        <fullName evidence="1">ATP synthase F(0) sector subunit c</fullName>
    </alternativeName>
    <alternativeName>
        <fullName evidence="1">F-type ATPase subunit c</fullName>
        <shortName evidence="1">F-ATPase subunit c</shortName>
    </alternativeName>
    <alternativeName>
        <fullName evidence="1">Lipid-binding protein</fullName>
    </alternativeName>
</protein>
<comment type="function">
    <text evidence="1">F(1)F(0) ATP synthase produces ATP from ADP in the presence of a proton or sodium gradient. F-type ATPases consist of two structural domains, F(1) containing the extramembraneous catalytic core and F(0) containing the membrane proton channel, linked together by a central stalk and a peripheral stalk. During catalysis, ATP synthesis in the catalytic domain of F(1) is coupled via a rotary mechanism of the central stalk subunits to proton translocation.</text>
</comment>
<comment type="function">
    <text evidence="1">Key component of the F(0) channel; it plays a direct role in translocation across the membrane. A homomeric c-ring of between 10-14 subunits forms the central stalk rotor element with the F(1) delta and epsilon subunits.</text>
</comment>
<comment type="subunit">
    <text evidence="1">F-type ATPases have 2 components, F(1) - the catalytic core - and F(0) - the membrane proton channel. F(1) has five subunits: alpha(3), beta(3), gamma(1), delta(1), epsilon(1). F(0) has three main subunits: a(1), b(2) and c(10-14). The alpha and beta chains form an alternating ring which encloses part of the gamma chain. F(1) is attached to F(0) by a central stalk formed by the gamma and epsilon chains, while a peripheral stalk is formed by the delta and b chains.</text>
</comment>
<comment type="subcellular location">
    <subcellularLocation>
        <location evidence="1">Cell inner membrane</location>
        <topology evidence="1">Multi-pass membrane protein</topology>
    </subcellularLocation>
</comment>
<comment type="similarity">
    <text evidence="1">Belongs to the ATPase C chain family.</text>
</comment>
<accession>Q30TH1</accession>
<keyword id="KW-0066">ATP synthesis</keyword>
<keyword id="KW-0997">Cell inner membrane</keyword>
<keyword id="KW-1003">Cell membrane</keyword>
<keyword id="KW-0138">CF(0)</keyword>
<keyword id="KW-0375">Hydrogen ion transport</keyword>
<keyword id="KW-0406">Ion transport</keyword>
<keyword id="KW-0446">Lipid-binding</keyword>
<keyword id="KW-0472">Membrane</keyword>
<keyword id="KW-1185">Reference proteome</keyword>
<keyword id="KW-0812">Transmembrane</keyword>
<keyword id="KW-1133">Transmembrane helix</keyword>
<keyword id="KW-0813">Transport</keyword>
<evidence type="ECO:0000255" key="1">
    <source>
        <dbReference type="HAMAP-Rule" id="MF_01396"/>
    </source>
</evidence>
<reference key="1">
    <citation type="journal article" date="2008" name="Appl. Environ. Microbiol.">
        <title>Genome of the epsilonproteobacterial chemolithoautotroph Sulfurimonas denitrificans.</title>
        <authorList>
            <person name="Sievert S.M."/>
            <person name="Scott K.M."/>
            <person name="Klotz M.G."/>
            <person name="Chain P.S.G."/>
            <person name="Hauser L.J."/>
            <person name="Hemp J."/>
            <person name="Huegler M."/>
            <person name="Land M."/>
            <person name="Lapidus A."/>
            <person name="Larimer F.W."/>
            <person name="Lucas S."/>
            <person name="Malfatti S.A."/>
            <person name="Meyer F."/>
            <person name="Paulsen I.T."/>
            <person name="Ren Q."/>
            <person name="Simon J."/>
            <person name="Bailey K."/>
            <person name="Diaz E."/>
            <person name="Fitzpatrick K.A."/>
            <person name="Glover B."/>
            <person name="Gwatney N."/>
            <person name="Korajkic A."/>
            <person name="Long A."/>
            <person name="Mobberley J.M."/>
            <person name="Pantry S.N."/>
            <person name="Pazder G."/>
            <person name="Peterson S."/>
            <person name="Quintanilla J.D."/>
            <person name="Sprinkle R."/>
            <person name="Stephens J."/>
            <person name="Thomas P."/>
            <person name="Vaughn R."/>
            <person name="Weber M.J."/>
            <person name="Wooten L.L."/>
        </authorList>
    </citation>
    <scope>NUCLEOTIDE SEQUENCE [LARGE SCALE GENOMIC DNA]</scope>
    <source>
        <strain>ATCC 33889 / DSM 1251</strain>
    </source>
</reference>
<feature type="chain" id="PRO_0000365925" description="ATP synthase subunit c">
    <location>
        <begin position="1"/>
        <end position="104"/>
    </location>
</feature>
<feature type="transmembrane region" description="Helical" evidence="1">
    <location>
        <begin position="31"/>
        <end position="51"/>
    </location>
</feature>
<feature type="transmembrane region" description="Helical" evidence="1">
    <location>
        <begin position="75"/>
        <end position="95"/>
    </location>
</feature>
<feature type="site" description="Reversibly protonated during proton transport" evidence="1">
    <location>
        <position position="83"/>
    </location>
</feature>
<organism>
    <name type="scientific">Sulfurimonas denitrificans (strain ATCC 33889 / DSM 1251)</name>
    <name type="common">Thiomicrospira denitrificans (strain ATCC 33889 / DSM 1251)</name>
    <dbReference type="NCBI Taxonomy" id="326298"/>
    <lineage>
        <taxon>Bacteria</taxon>
        <taxon>Pseudomonadati</taxon>
        <taxon>Campylobacterota</taxon>
        <taxon>Epsilonproteobacteria</taxon>
        <taxon>Campylobacterales</taxon>
        <taxon>Sulfurimonadaceae</taxon>
        <taxon>Sulfurimonas</taxon>
    </lineage>
</organism>
<gene>
    <name evidence="1" type="primary">atpE</name>
    <name type="ordered locus">Suden_0429</name>
</gene>
<name>ATPL_SULDN</name>